<organism>
    <name type="scientific">Caldicellulosiruptor saccharolyticus (strain ATCC 43494 / DSM 8903 / Tp8T 6331)</name>
    <dbReference type="NCBI Taxonomy" id="351627"/>
    <lineage>
        <taxon>Bacteria</taxon>
        <taxon>Bacillati</taxon>
        <taxon>Bacillota</taxon>
        <taxon>Bacillota incertae sedis</taxon>
        <taxon>Caldicellulosiruptorales</taxon>
        <taxon>Caldicellulosiruptoraceae</taxon>
        <taxon>Caldicellulosiruptor</taxon>
    </lineage>
</organism>
<sequence>MDLFGKKVLVIGMGKSGISSARFLKKHGAYVVAFDEKREDEMKTQQKETIRKFADELYFNDLPDAVVDTSDMVVISPGVPLTKRYITLAHKRGIEVIGEIELAYRFCRSKNIVAITGTNGKTTTTTLVGEILKKVFDNVIVCGNIGFPFIDYVESSTDDTIFVIEISSFQLETIKYFKPMVGCILNITPDHLNRHMNMDNYIRAKMRIFENIDQEGYSVLNMDNSITRDLIGCAKGTVITFSKNESDTQNSVFVDGDFIYRNFLGKVEKVMRKDDIFMPGEHNLENTLAAIGCVLPFEIQPSIIEKTLKEFKGVEHRIEFVREINGVRFYNDSKGTNTDASSKALNSFEVPIILIAGGYDKGESFEKFAKLISQKVKKVFLLGQTKQKIADQLQKIGYLNFEFVEDLKEAVKKSFEIAKEGDVVLLSPACASWDMFESYEQRGRLFKQYVNEL</sequence>
<feature type="chain" id="PRO_1000056878" description="UDP-N-acetylmuramoylalanine--D-glutamate ligase">
    <location>
        <begin position="1"/>
        <end position="453"/>
    </location>
</feature>
<feature type="binding site" evidence="1">
    <location>
        <begin position="117"/>
        <end position="123"/>
    </location>
    <ligand>
        <name>ATP</name>
        <dbReference type="ChEBI" id="CHEBI:30616"/>
    </ligand>
</feature>
<proteinExistence type="inferred from homology"/>
<protein>
    <recommendedName>
        <fullName evidence="1">UDP-N-acetylmuramoylalanine--D-glutamate ligase</fullName>
        <ecNumber evidence="1">6.3.2.9</ecNumber>
    </recommendedName>
    <alternativeName>
        <fullName evidence="1">D-glutamic acid-adding enzyme</fullName>
    </alternativeName>
    <alternativeName>
        <fullName evidence="1">UDP-N-acetylmuramoyl-L-alanyl-D-glutamate synthetase</fullName>
    </alternativeName>
</protein>
<comment type="function">
    <text evidence="1">Cell wall formation. Catalyzes the addition of glutamate to the nucleotide precursor UDP-N-acetylmuramoyl-L-alanine (UMA).</text>
</comment>
<comment type="catalytic activity">
    <reaction evidence="1">
        <text>UDP-N-acetyl-alpha-D-muramoyl-L-alanine + D-glutamate + ATP = UDP-N-acetyl-alpha-D-muramoyl-L-alanyl-D-glutamate + ADP + phosphate + H(+)</text>
        <dbReference type="Rhea" id="RHEA:16429"/>
        <dbReference type="ChEBI" id="CHEBI:15378"/>
        <dbReference type="ChEBI" id="CHEBI:29986"/>
        <dbReference type="ChEBI" id="CHEBI:30616"/>
        <dbReference type="ChEBI" id="CHEBI:43474"/>
        <dbReference type="ChEBI" id="CHEBI:83898"/>
        <dbReference type="ChEBI" id="CHEBI:83900"/>
        <dbReference type="ChEBI" id="CHEBI:456216"/>
        <dbReference type="EC" id="6.3.2.9"/>
    </reaction>
</comment>
<comment type="pathway">
    <text evidence="1">Cell wall biogenesis; peptidoglycan biosynthesis.</text>
</comment>
<comment type="subcellular location">
    <subcellularLocation>
        <location evidence="1">Cytoplasm</location>
    </subcellularLocation>
</comment>
<comment type="similarity">
    <text evidence="1">Belongs to the MurCDEF family.</text>
</comment>
<accession>A4XI02</accession>
<reference key="1">
    <citation type="submission" date="2007-04" db="EMBL/GenBank/DDBJ databases">
        <title>Genome sequence of the thermophilic hydrogen-producing bacterium Caldicellulosiruptor saccharolyticus DSM 8903.</title>
        <authorList>
            <person name="Copeland A."/>
            <person name="Lucas S."/>
            <person name="Lapidus A."/>
            <person name="Barry K."/>
            <person name="Detter J.C."/>
            <person name="Glavina del Rio T."/>
            <person name="Hammon N."/>
            <person name="Israni S."/>
            <person name="Dalin E."/>
            <person name="Tice H."/>
            <person name="Pitluck S."/>
            <person name="Kiss H."/>
            <person name="Brettin T."/>
            <person name="Bruce D."/>
            <person name="Han C."/>
            <person name="Schmutz J."/>
            <person name="Larimer F."/>
            <person name="Land M."/>
            <person name="Hauser L."/>
            <person name="Kyrpides N."/>
            <person name="Lykidis A."/>
            <person name="van de Werken H.J.G."/>
            <person name="Verhaart M.R.A."/>
            <person name="VanFossen A.L."/>
            <person name="Lewis D.L."/>
            <person name="Nichols J.D."/>
            <person name="Goorissen H.P."/>
            <person name="van Niel E.W.J."/>
            <person name="Stams F.J.M."/>
            <person name="Willquist K.U."/>
            <person name="Ward D.E."/>
            <person name="van der Oost J."/>
            <person name="Kelly R.M."/>
            <person name="Kengen S.M.W."/>
            <person name="Richardson P."/>
        </authorList>
    </citation>
    <scope>NUCLEOTIDE SEQUENCE [LARGE SCALE GENOMIC DNA]</scope>
    <source>
        <strain>ATCC 43494 / DSM 8903 / Tp8T 6331</strain>
    </source>
</reference>
<evidence type="ECO:0000255" key="1">
    <source>
        <dbReference type="HAMAP-Rule" id="MF_00639"/>
    </source>
</evidence>
<keyword id="KW-0067">ATP-binding</keyword>
<keyword id="KW-0131">Cell cycle</keyword>
<keyword id="KW-0132">Cell division</keyword>
<keyword id="KW-0133">Cell shape</keyword>
<keyword id="KW-0961">Cell wall biogenesis/degradation</keyword>
<keyword id="KW-0963">Cytoplasm</keyword>
<keyword id="KW-0436">Ligase</keyword>
<keyword id="KW-0547">Nucleotide-binding</keyword>
<keyword id="KW-0573">Peptidoglycan synthesis</keyword>
<gene>
    <name evidence="1" type="primary">murD</name>
    <name type="ordered locus">Csac_0923</name>
</gene>
<name>MURD_CALS8</name>
<dbReference type="EC" id="6.3.2.9" evidence="1"/>
<dbReference type="EMBL" id="CP000679">
    <property type="protein sequence ID" value="ABP66537.1"/>
    <property type="molecule type" value="Genomic_DNA"/>
</dbReference>
<dbReference type="RefSeq" id="WP_011916483.1">
    <property type="nucleotide sequence ID" value="NC_009437.1"/>
</dbReference>
<dbReference type="SMR" id="A4XI02"/>
<dbReference type="STRING" id="351627.Csac_0923"/>
<dbReference type="KEGG" id="csc:Csac_0923"/>
<dbReference type="eggNOG" id="COG0771">
    <property type="taxonomic scope" value="Bacteria"/>
</dbReference>
<dbReference type="HOGENOM" id="CLU_032540_0_0_9"/>
<dbReference type="OrthoDB" id="9809796at2"/>
<dbReference type="UniPathway" id="UPA00219"/>
<dbReference type="Proteomes" id="UP000000256">
    <property type="component" value="Chromosome"/>
</dbReference>
<dbReference type="GO" id="GO:0005737">
    <property type="term" value="C:cytoplasm"/>
    <property type="evidence" value="ECO:0007669"/>
    <property type="project" value="UniProtKB-SubCell"/>
</dbReference>
<dbReference type="GO" id="GO:0005524">
    <property type="term" value="F:ATP binding"/>
    <property type="evidence" value="ECO:0007669"/>
    <property type="project" value="UniProtKB-UniRule"/>
</dbReference>
<dbReference type="GO" id="GO:0008764">
    <property type="term" value="F:UDP-N-acetylmuramoylalanine-D-glutamate ligase activity"/>
    <property type="evidence" value="ECO:0007669"/>
    <property type="project" value="UniProtKB-UniRule"/>
</dbReference>
<dbReference type="GO" id="GO:0051301">
    <property type="term" value="P:cell division"/>
    <property type="evidence" value="ECO:0007669"/>
    <property type="project" value="UniProtKB-KW"/>
</dbReference>
<dbReference type="GO" id="GO:0071555">
    <property type="term" value="P:cell wall organization"/>
    <property type="evidence" value="ECO:0007669"/>
    <property type="project" value="UniProtKB-KW"/>
</dbReference>
<dbReference type="GO" id="GO:0009252">
    <property type="term" value="P:peptidoglycan biosynthetic process"/>
    <property type="evidence" value="ECO:0007669"/>
    <property type="project" value="UniProtKB-UniRule"/>
</dbReference>
<dbReference type="GO" id="GO:0008360">
    <property type="term" value="P:regulation of cell shape"/>
    <property type="evidence" value="ECO:0007669"/>
    <property type="project" value="UniProtKB-KW"/>
</dbReference>
<dbReference type="Gene3D" id="3.90.190.20">
    <property type="entry name" value="Mur ligase, C-terminal domain"/>
    <property type="match status" value="1"/>
</dbReference>
<dbReference type="Gene3D" id="3.40.1190.10">
    <property type="entry name" value="Mur-like, catalytic domain"/>
    <property type="match status" value="1"/>
</dbReference>
<dbReference type="Gene3D" id="3.40.50.720">
    <property type="entry name" value="NAD(P)-binding Rossmann-like Domain"/>
    <property type="match status" value="1"/>
</dbReference>
<dbReference type="HAMAP" id="MF_00639">
    <property type="entry name" value="MurD"/>
    <property type="match status" value="1"/>
</dbReference>
<dbReference type="InterPro" id="IPR036565">
    <property type="entry name" value="Mur-like_cat_sf"/>
</dbReference>
<dbReference type="InterPro" id="IPR004101">
    <property type="entry name" value="Mur_ligase_C"/>
</dbReference>
<dbReference type="InterPro" id="IPR036615">
    <property type="entry name" value="Mur_ligase_C_dom_sf"/>
</dbReference>
<dbReference type="InterPro" id="IPR013221">
    <property type="entry name" value="Mur_ligase_cen"/>
</dbReference>
<dbReference type="InterPro" id="IPR005762">
    <property type="entry name" value="MurD"/>
</dbReference>
<dbReference type="NCBIfam" id="TIGR01087">
    <property type="entry name" value="murD"/>
    <property type="match status" value="1"/>
</dbReference>
<dbReference type="PANTHER" id="PTHR43692">
    <property type="entry name" value="UDP-N-ACETYLMURAMOYLALANINE--D-GLUTAMATE LIGASE"/>
    <property type="match status" value="1"/>
</dbReference>
<dbReference type="PANTHER" id="PTHR43692:SF1">
    <property type="entry name" value="UDP-N-ACETYLMURAMOYLALANINE--D-GLUTAMATE LIGASE"/>
    <property type="match status" value="1"/>
</dbReference>
<dbReference type="Pfam" id="PF02875">
    <property type="entry name" value="Mur_ligase_C"/>
    <property type="match status" value="1"/>
</dbReference>
<dbReference type="Pfam" id="PF08245">
    <property type="entry name" value="Mur_ligase_M"/>
    <property type="match status" value="1"/>
</dbReference>
<dbReference type="Pfam" id="PF21799">
    <property type="entry name" value="MurD-like_N"/>
    <property type="match status" value="1"/>
</dbReference>
<dbReference type="SUPFAM" id="SSF51984">
    <property type="entry name" value="MurCD N-terminal domain"/>
    <property type="match status" value="1"/>
</dbReference>
<dbReference type="SUPFAM" id="SSF53623">
    <property type="entry name" value="MurD-like peptide ligases, catalytic domain"/>
    <property type="match status" value="1"/>
</dbReference>
<dbReference type="SUPFAM" id="SSF53244">
    <property type="entry name" value="MurD-like peptide ligases, peptide-binding domain"/>
    <property type="match status" value="1"/>
</dbReference>